<sequence>MAFIDPAQLDLEDRVVAINRITKVVKGGRRLRFAALVVVGDHNGHVGFGTGKAQEVPEAIRKAVDAARKNLIEVPTVGTTLPHEVIGQYSGSRIMLKPAIAGSGVAAGGAVRAVMELAGIADVTSKSLGSNTPVNVVRATFDGLVNMKDAESVAKLRGVSVQHLAE</sequence>
<evidence type="ECO:0000255" key="1">
    <source>
        <dbReference type="HAMAP-Rule" id="MF_01307"/>
    </source>
</evidence>
<evidence type="ECO:0000305" key="2"/>
<name>RS5_LIGS1</name>
<comment type="function">
    <text evidence="1">With S4 and S12 plays an important role in translational accuracy.</text>
</comment>
<comment type="function">
    <text evidence="1">Located at the back of the 30S subunit body where it stabilizes the conformation of the head with respect to the body.</text>
</comment>
<comment type="subunit">
    <text evidence="1">Part of the 30S ribosomal subunit. Contacts proteins S4 and S8.</text>
</comment>
<comment type="domain">
    <text>The N-terminal domain interacts with the head of the 30S subunit; the C-terminal domain interacts with the body and contacts protein S4. The interaction surface between S4 and S5 is involved in control of translational fidelity.</text>
</comment>
<comment type="similarity">
    <text evidence="1">Belongs to the universal ribosomal protein uS5 family.</text>
</comment>
<proteinExistence type="inferred from homology"/>
<dbReference type="EMBL" id="CP000233">
    <property type="protein sequence ID" value="ABE00222.1"/>
    <property type="molecule type" value="Genomic_DNA"/>
</dbReference>
<dbReference type="RefSeq" id="WP_003701326.1">
    <property type="nucleotide sequence ID" value="NC_007929.1"/>
</dbReference>
<dbReference type="RefSeq" id="YP_536305.1">
    <property type="nucleotide sequence ID" value="NC_007929.1"/>
</dbReference>
<dbReference type="SMR" id="Q1WSA7"/>
<dbReference type="STRING" id="362948.LSL_1418"/>
<dbReference type="GeneID" id="89466153"/>
<dbReference type="KEGG" id="lsl:LSL_1418"/>
<dbReference type="PATRIC" id="fig|362948.14.peg.1501"/>
<dbReference type="HOGENOM" id="CLU_065898_2_2_9"/>
<dbReference type="OrthoDB" id="9809045at2"/>
<dbReference type="Proteomes" id="UP000006559">
    <property type="component" value="Chromosome"/>
</dbReference>
<dbReference type="GO" id="GO:0015935">
    <property type="term" value="C:small ribosomal subunit"/>
    <property type="evidence" value="ECO:0007669"/>
    <property type="project" value="InterPro"/>
</dbReference>
<dbReference type="GO" id="GO:0019843">
    <property type="term" value="F:rRNA binding"/>
    <property type="evidence" value="ECO:0007669"/>
    <property type="project" value="UniProtKB-UniRule"/>
</dbReference>
<dbReference type="GO" id="GO:0003735">
    <property type="term" value="F:structural constituent of ribosome"/>
    <property type="evidence" value="ECO:0007669"/>
    <property type="project" value="InterPro"/>
</dbReference>
<dbReference type="GO" id="GO:0006412">
    <property type="term" value="P:translation"/>
    <property type="evidence" value="ECO:0007669"/>
    <property type="project" value="UniProtKB-UniRule"/>
</dbReference>
<dbReference type="FunFam" id="3.30.160.20:FF:000001">
    <property type="entry name" value="30S ribosomal protein S5"/>
    <property type="match status" value="1"/>
</dbReference>
<dbReference type="FunFam" id="3.30.230.10:FF:000002">
    <property type="entry name" value="30S ribosomal protein S5"/>
    <property type="match status" value="1"/>
</dbReference>
<dbReference type="Gene3D" id="3.30.160.20">
    <property type="match status" value="1"/>
</dbReference>
<dbReference type="Gene3D" id="3.30.230.10">
    <property type="match status" value="1"/>
</dbReference>
<dbReference type="HAMAP" id="MF_01307_B">
    <property type="entry name" value="Ribosomal_uS5_B"/>
    <property type="match status" value="1"/>
</dbReference>
<dbReference type="InterPro" id="IPR020568">
    <property type="entry name" value="Ribosomal_Su5_D2-typ_SF"/>
</dbReference>
<dbReference type="InterPro" id="IPR000851">
    <property type="entry name" value="Ribosomal_uS5"/>
</dbReference>
<dbReference type="InterPro" id="IPR005712">
    <property type="entry name" value="Ribosomal_uS5_bac-type"/>
</dbReference>
<dbReference type="InterPro" id="IPR005324">
    <property type="entry name" value="Ribosomal_uS5_C"/>
</dbReference>
<dbReference type="InterPro" id="IPR013810">
    <property type="entry name" value="Ribosomal_uS5_N"/>
</dbReference>
<dbReference type="InterPro" id="IPR018192">
    <property type="entry name" value="Ribosomal_uS5_N_CS"/>
</dbReference>
<dbReference type="InterPro" id="IPR014721">
    <property type="entry name" value="Ribsml_uS5_D2-typ_fold_subgr"/>
</dbReference>
<dbReference type="NCBIfam" id="TIGR01021">
    <property type="entry name" value="rpsE_bact"/>
    <property type="match status" value="1"/>
</dbReference>
<dbReference type="PANTHER" id="PTHR48277">
    <property type="entry name" value="MITOCHONDRIAL RIBOSOMAL PROTEIN S5"/>
    <property type="match status" value="1"/>
</dbReference>
<dbReference type="PANTHER" id="PTHR48277:SF1">
    <property type="entry name" value="MITOCHONDRIAL RIBOSOMAL PROTEIN S5"/>
    <property type="match status" value="1"/>
</dbReference>
<dbReference type="Pfam" id="PF00333">
    <property type="entry name" value="Ribosomal_S5"/>
    <property type="match status" value="1"/>
</dbReference>
<dbReference type="Pfam" id="PF03719">
    <property type="entry name" value="Ribosomal_S5_C"/>
    <property type="match status" value="1"/>
</dbReference>
<dbReference type="SUPFAM" id="SSF54768">
    <property type="entry name" value="dsRNA-binding domain-like"/>
    <property type="match status" value="1"/>
</dbReference>
<dbReference type="SUPFAM" id="SSF54211">
    <property type="entry name" value="Ribosomal protein S5 domain 2-like"/>
    <property type="match status" value="1"/>
</dbReference>
<dbReference type="PROSITE" id="PS00585">
    <property type="entry name" value="RIBOSOMAL_S5"/>
    <property type="match status" value="1"/>
</dbReference>
<dbReference type="PROSITE" id="PS50881">
    <property type="entry name" value="S5_DSRBD"/>
    <property type="match status" value="1"/>
</dbReference>
<accession>Q1WSA7</accession>
<organism>
    <name type="scientific">Ligilactobacillus salivarius (strain UCC118)</name>
    <name type="common">Lactobacillus salivarius</name>
    <dbReference type="NCBI Taxonomy" id="362948"/>
    <lineage>
        <taxon>Bacteria</taxon>
        <taxon>Bacillati</taxon>
        <taxon>Bacillota</taxon>
        <taxon>Bacilli</taxon>
        <taxon>Lactobacillales</taxon>
        <taxon>Lactobacillaceae</taxon>
        <taxon>Ligilactobacillus</taxon>
    </lineage>
</organism>
<reference key="1">
    <citation type="journal article" date="2006" name="Proc. Natl. Acad. Sci. U.S.A.">
        <title>Multireplicon genome architecture of Lactobacillus salivarius.</title>
        <authorList>
            <person name="Claesson M.J."/>
            <person name="Li Y."/>
            <person name="Leahy S."/>
            <person name="Canchaya C."/>
            <person name="van Pijkeren J.P."/>
            <person name="Cerdeno-Tarraga A.M."/>
            <person name="Parkhill J."/>
            <person name="Flynn S."/>
            <person name="O'Sullivan G.C."/>
            <person name="Collins J.K."/>
            <person name="Higgins D."/>
            <person name="Shanahan F."/>
            <person name="Fitzgerald G.F."/>
            <person name="van Sinderen D."/>
            <person name="O'Toole P.W."/>
        </authorList>
    </citation>
    <scope>NUCLEOTIDE SEQUENCE [LARGE SCALE GENOMIC DNA]</scope>
    <source>
        <strain>UCC118</strain>
    </source>
</reference>
<keyword id="KW-1185">Reference proteome</keyword>
<keyword id="KW-0687">Ribonucleoprotein</keyword>
<keyword id="KW-0689">Ribosomal protein</keyword>
<keyword id="KW-0694">RNA-binding</keyword>
<keyword id="KW-0699">rRNA-binding</keyword>
<gene>
    <name evidence="1" type="primary">rpsE</name>
    <name type="ordered locus">LSL_1418</name>
</gene>
<feature type="chain" id="PRO_0000323144" description="Small ribosomal subunit protein uS5">
    <location>
        <begin position="1"/>
        <end position="166"/>
    </location>
</feature>
<feature type="domain" description="S5 DRBM" evidence="1">
    <location>
        <begin position="11"/>
        <end position="74"/>
    </location>
</feature>
<protein>
    <recommendedName>
        <fullName evidence="1">Small ribosomal subunit protein uS5</fullName>
    </recommendedName>
    <alternativeName>
        <fullName evidence="2">30S ribosomal protein S5</fullName>
    </alternativeName>
</protein>